<gene>
    <name evidence="1" type="primary">hisS1</name>
    <name type="ordered locus">BT9727_3117</name>
</gene>
<proteinExistence type="inferred from homology"/>
<name>SYH1_BACHK</name>
<feature type="chain" id="PRO_0000136106" description="Histidine--tRNA ligase 1">
    <location>
        <begin position="1"/>
        <end position="425"/>
    </location>
</feature>
<organism>
    <name type="scientific">Bacillus thuringiensis subsp. konkukian (strain 97-27)</name>
    <dbReference type="NCBI Taxonomy" id="281309"/>
    <lineage>
        <taxon>Bacteria</taxon>
        <taxon>Bacillati</taxon>
        <taxon>Bacillota</taxon>
        <taxon>Bacilli</taxon>
        <taxon>Bacillales</taxon>
        <taxon>Bacillaceae</taxon>
        <taxon>Bacillus</taxon>
        <taxon>Bacillus cereus group</taxon>
    </lineage>
</organism>
<protein>
    <recommendedName>
        <fullName evidence="1">Histidine--tRNA ligase 1</fullName>
        <ecNumber evidence="1">6.1.1.21</ecNumber>
    </recommendedName>
    <alternativeName>
        <fullName evidence="1">Histidyl-tRNA synthetase 1</fullName>
        <shortName evidence="1">HisRS 1</shortName>
    </alternativeName>
</protein>
<reference key="1">
    <citation type="journal article" date="2006" name="J. Bacteriol.">
        <title>Pathogenomic sequence analysis of Bacillus cereus and Bacillus thuringiensis isolates closely related to Bacillus anthracis.</title>
        <authorList>
            <person name="Han C.S."/>
            <person name="Xie G."/>
            <person name="Challacombe J.F."/>
            <person name="Altherr M.R."/>
            <person name="Bhotika S.S."/>
            <person name="Bruce D."/>
            <person name="Campbell C.S."/>
            <person name="Campbell M.L."/>
            <person name="Chen J."/>
            <person name="Chertkov O."/>
            <person name="Cleland C."/>
            <person name="Dimitrijevic M."/>
            <person name="Doggett N.A."/>
            <person name="Fawcett J.J."/>
            <person name="Glavina T."/>
            <person name="Goodwin L.A."/>
            <person name="Hill K.K."/>
            <person name="Hitchcock P."/>
            <person name="Jackson P.J."/>
            <person name="Keim P."/>
            <person name="Kewalramani A.R."/>
            <person name="Longmire J."/>
            <person name="Lucas S."/>
            <person name="Malfatti S."/>
            <person name="McMurry K."/>
            <person name="Meincke L.J."/>
            <person name="Misra M."/>
            <person name="Moseman B.L."/>
            <person name="Mundt M."/>
            <person name="Munk A.C."/>
            <person name="Okinaka R.T."/>
            <person name="Parson-Quintana B."/>
            <person name="Reilly L.P."/>
            <person name="Richardson P."/>
            <person name="Robinson D.L."/>
            <person name="Rubin E."/>
            <person name="Saunders E."/>
            <person name="Tapia R."/>
            <person name="Tesmer J.G."/>
            <person name="Thayer N."/>
            <person name="Thompson L.S."/>
            <person name="Tice H."/>
            <person name="Ticknor L.O."/>
            <person name="Wills P.L."/>
            <person name="Brettin T.S."/>
            <person name="Gilna P."/>
        </authorList>
    </citation>
    <scope>NUCLEOTIDE SEQUENCE [LARGE SCALE GENOMIC DNA]</scope>
    <source>
        <strain>97-27</strain>
    </source>
</reference>
<comment type="catalytic activity">
    <reaction evidence="1">
        <text>tRNA(His) + L-histidine + ATP = L-histidyl-tRNA(His) + AMP + diphosphate + H(+)</text>
        <dbReference type="Rhea" id="RHEA:17313"/>
        <dbReference type="Rhea" id="RHEA-COMP:9665"/>
        <dbReference type="Rhea" id="RHEA-COMP:9689"/>
        <dbReference type="ChEBI" id="CHEBI:15378"/>
        <dbReference type="ChEBI" id="CHEBI:30616"/>
        <dbReference type="ChEBI" id="CHEBI:33019"/>
        <dbReference type="ChEBI" id="CHEBI:57595"/>
        <dbReference type="ChEBI" id="CHEBI:78442"/>
        <dbReference type="ChEBI" id="CHEBI:78527"/>
        <dbReference type="ChEBI" id="CHEBI:456215"/>
        <dbReference type="EC" id="6.1.1.21"/>
    </reaction>
</comment>
<comment type="subunit">
    <text evidence="1">Homodimer.</text>
</comment>
<comment type="subcellular location">
    <subcellularLocation>
        <location evidence="1">Cytoplasm</location>
    </subcellularLocation>
</comment>
<comment type="similarity">
    <text evidence="1">Belongs to the class-II aminoacyl-tRNA synthetase family.</text>
</comment>
<keyword id="KW-0030">Aminoacyl-tRNA synthetase</keyword>
<keyword id="KW-0067">ATP-binding</keyword>
<keyword id="KW-0963">Cytoplasm</keyword>
<keyword id="KW-0436">Ligase</keyword>
<keyword id="KW-0547">Nucleotide-binding</keyword>
<keyword id="KW-0648">Protein biosynthesis</keyword>
<accession>Q6HG86</accession>
<sequence length="425" mass="47901">MEMRNVKGTKDYLPEEQVLRNKIKRACEDTFERYGCKPLETPTLNMYELMSYKYGGGDEILKEIYTLQDQGKRDLALRYDLTIPFAKVVAMNPNIRLPFKRYEIGKVFRDGPIKQGRFREFIQCDVDIVGVESVMAEAELMSMAFELFQTLNLEVTIQYNNRKLLNGILQAIHIPTELTSDVILSLDKIEKIGIDGVRKDVLERGISEEMADTICNTVLSCLQLSIADFEEAFNNPLVADGVNELQQLQQYLIALGINENTIFNPFLARGLTMYTGTVYEIFLKDGSITSSIGSGGRYDNIIGAFRGDNMNYPTVGISFGLDVIYTALSQKETVSSTADVFIIPLGTELQCLQIAQQLRSTTSLKIELELAGRKLKRALNYANKENIPYVLIIGEEEICTETVMLRNMKEGSEVKVPLSSLSNYL</sequence>
<evidence type="ECO:0000255" key="1">
    <source>
        <dbReference type="HAMAP-Rule" id="MF_00127"/>
    </source>
</evidence>
<dbReference type="EC" id="6.1.1.21" evidence="1"/>
<dbReference type="EMBL" id="AE017355">
    <property type="protein sequence ID" value="AAT61219.1"/>
    <property type="molecule type" value="Genomic_DNA"/>
</dbReference>
<dbReference type="RefSeq" id="WP_000425978.1">
    <property type="nucleotide sequence ID" value="NC_005957.1"/>
</dbReference>
<dbReference type="RefSeq" id="YP_037440.1">
    <property type="nucleotide sequence ID" value="NC_005957.1"/>
</dbReference>
<dbReference type="SMR" id="Q6HG86"/>
<dbReference type="KEGG" id="btk:BT9727_3117"/>
<dbReference type="PATRIC" id="fig|281309.8.peg.3319"/>
<dbReference type="HOGENOM" id="CLU_025113_3_0_9"/>
<dbReference type="Proteomes" id="UP000001301">
    <property type="component" value="Chromosome"/>
</dbReference>
<dbReference type="GO" id="GO:0005737">
    <property type="term" value="C:cytoplasm"/>
    <property type="evidence" value="ECO:0007669"/>
    <property type="project" value="UniProtKB-SubCell"/>
</dbReference>
<dbReference type="GO" id="GO:0005524">
    <property type="term" value="F:ATP binding"/>
    <property type="evidence" value="ECO:0007669"/>
    <property type="project" value="UniProtKB-UniRule"/>
</dbReference>
<dbReference type="GO" id="GO:0140096">
    <property type="term" value="F:catalytic activity, acting on a protein"/>
    <property type="evidence" value="ECO:0007669"/>
    <property type="project" value="UniProtKB-ARBA"/>
</dbReference>
<dbReference type="GO" id="GO:0004821">
    <property type="term" value="F:histidine-tRNA ligase activity"/>
    <property type="evidence" value="ECO:0007669"/>
    <property type="project" value="UniProtKB-UniRule"/>
</dbReference>
<dbReference type="GO" id="GO:0016740">
    <property type="term" value="F:transferase activity"/>
    <property type="evidence" value="ECO:0007669"/>
    <property type="project" value="UniProtKB-ARBA"/>
</dbReference>
<dbReference type="GO" id="GO:0006427">
    <property type="term" value="P:histidyl-tRNA aminoacylation"/>
    <property type="evidence" value="ECO:0007669"/>
    <property type="project" value="UniProtKB-UniRule"/>
</dbReference>
<dbReference type="CDD" id="cd00773">
    <property type="entry name" value="HisRS-like_core"/>
    <property type="match status" value="1"/>
</dbReference>
<dbReference type="CDD" id="cd00859">
    <property type="entry name" value="HisRS_anticodon"/>
    <property type="match status" value="1"/>
</dbReference>
<dbReference type="FunFam" id="3.30.930.10:FF:000099">
    <property type="entry name" value="Histidine--tRNA ligase"/>
    <property type="match status" value="1"/>
</dbReference>
<dbReference type="FunFam" id="3.40.50.800:FF:000033">
    <property type="entry name" value="Histidine--tRNA ligase"/>
    <property type="match status" value="1"/>
</dbReference>
<dbReference type="Gene3D" id="3.40.50.800">
    <property type="entry name" value="Anticodon-binding domain"/>
    <property type="match status" value="1"/>
</dbReference>
<dbReference type="Gene3D" id="3.30.930.10">
    <property type="entry name" value="Bira Bifunctional Protein, Domain 2"/>
    <property type="match status" value="1"/>
</dbReference>
<dbReference type="HAMAP" id="MF_00127">
    <property type="entry name" value="His_tRNA_synth"/>
    <property type="match status" value="1"/>
</dbReference>
<dbReference type="InterPro" id="IPR006195">
    <property type="entry name" value="aa-tRNA-synth_II"/>
</dbReference>
<dbReference type="InterPro" id="IPR045864">
    <property type="entry name" value="aa-tRNA-synth_II/BPL/LPL"/>
</dbReference>
<dbReference type="InterPro" id="IPR004154">
    <property type="entry name" value="Anticodon-bd"/>
</dbReference>
<dbReference type="InterPro" id="IPR036621">
    <property type="entry name" value="Anticodon-bd_dom_sf"/>
</dbReference>
<dbReference type="InterPro" id="IPR015807">
    <property type="entry name" value="His-tRNA-ligase"/>
</dbReference>
<dbReference type="InterPro" id="IPR041715">
    <property type="entry name" value="HisRS-like_core"/>
</dbReference>
<dbReference type="InterPro" id="IPR004516">
    <property type="entry name" value="HisRS/HisZ"/>
</dbReference>
<dbReference type="InterPro" id="IPR033656">
    <property type="entry name" value="HisRS_anticodon"/>
</dbReference>
<dbReference type="NCBIfam" id="TIGR00442">
    <property type="entry name" value="hisS"/>
    <property type="match status" value="1"/>
</dbReference>
<dbReference type="NCBIfam" id="NF009085">
    <property type="entry name" value="PRK12420.1"/>
    <property type="match status" value="1"/>
</dbReference>
<dbReference type="PANTHER" id="PTHR11476:SF7">
    <property type="entry name" value="HISTIDINE--TRNA LIGASE"/>
    <property type="match status" value="1"/>
</dbReference>
<dbReference type="PANTHER" id="PTHR11476">
    <property type="entry name" value="HISTIDYL-TRNA SYNTHETASE"/>
    <property type="match status" value="1"/>
</dbReference>
<dbReference type="Pfam" id="PF03129">
    <property type="entry name" value="HGTP_anticodon"/>
    <property type="match status" value="1"/>
</dbReference>
<dbReference type="Pfam" id="PF13393">
    <property type="entry name" value="tRNA-synt_His"/>
    <property type="match status" value="1"/>
</dbReference>
<dbReference type="PIRSF" id="PIRSF001549">
    <property type="entry name" value="His-tRNA_synth"/>
    <property type="match status" value="1"/>
</dbReference>
<dbReference type="SUPFAM" id="SSF52954">
    <property type="entry name" value="Class II aaRS ABD-related"/>
    <property type="match status" value="1"/>
</dbReference>
<dbReference type="SUPFAM" id="SSF55681">
    <property type="entry name" value="Class II aaRS and biotin synthetases"/>
    <property type="match status" value="1"/>
</dbReference>
<dbReference type="PROSITE" id="PS50862">
    <property type="entry name" value="AA_TRNA_LIGASE_II"/>
    <property type="match status" value="1"/>
</dbReference>